<gene>
    <name evidence="1" type="primary">patA</name>
    <name type="ordered locus">KPN78578_34720</name>
    <name type="ORF">KPN_03501</name>
</gene>
<keyword id="KW-0032">Aminotransferase</keyword>
<keyword id="KW-0663">Pyridoxal phosphate</keyword>
<keyword id="KW-0808">Transferase</keyword>
<comment type="function">
    <text evidence="1">Catalyzes the aminotransferase reaction from putrescine to 2-oxoglutarate, leading to glutamate and 4-aminobutanal, which spontaneously cyclizes to form 1-pyrroline. This is the first step in one of two pathways for putrescine degradation, where putrescine is converted into 4-aminobutanoate (gamma-aminobutyrate or GABA) via 4-aminobutanal. Also functions as a cadaverine transaminase in a a L-lysine degradation pathway to succinate that proceeds via cadaverine, glutarate and L-2-hydroxyglutarate.</text>
</comment>
<comment type="catalytic activity">
    <reaction evidence="1">
        <text>an alkane-alpha,omega-diamine + 2-oxoglutarate = an omega-aminoaldehyde + L-glutamate</text>
        <dbReference type="Rhea" id="RHEA:18217"/>
        <dbReference type="Rhea" id="RHEA-COMP:9766"/>
        <dbReference type="Rhea" id="RHEA-COMP:12750"/>
        <dbReference type="ChEBI" id="CHEBI:16810"/>
        <dbReference type="ChEBI" id="CHEBI:29985"/>
        <dbReference type="ChEBI" id="CHEBI:70977"/>
        <dbReference type="ChEBI" id="CHEBI:133427"/>
        <dbReference type="EC" id="2.6.1.29"/>
    </reaction>
    <physiologicalReaction direction="left-to-right" evidence="1">
        <dbReference type="Rhea" id="RHEA:18218"/>
    </physiologicalReaction>
</comment>
<comment type="catalytic activity">
    <reaction evidence="1">
        <text>putrescine + 2-oxoglutarate = 1-pyrroline + L-glutamate + H2O</text>
        <dbReference type="Rhea" id="RHEA:12268"/>
        <dbReference type="ChEBI" id="CHEBI:15377"/>
        <dbReference type="ChEBI" id="CHEBI:16810"/>
        <dbReference type="ChEBI" id="CHEBI:29985"/>
        <dbReference type="ChEBI" id="CHEBI:36781"/>
        <dbReference type="ChEBI" id="CHEBI:326268"/>
        <dbReference type="EC" id="2.6.1.82"/>
    </reaction>
    <physiologicalReaction direction="left-to-right" evidence="1">
        <dbReference type="Rhea" id="RHEA:12269"/>
    </physiologicalReaction>
</comment>
<comment type="catalytic activity">
    <reaction evidence="1">
        <text>cadaverine + 2-oxoglutarate = 5-aminopentanal + L-glutamate</text>
        <dbReference type="Rhea" id="RHEA:61624"/>
        <dbReference type="ChEBI" id="CHEBI:16810"/>
        <dbReference type="ChEBI" id="CHEBI:29985"/>
        <dbReference type="ChEBI" id="CHEBI:58384"/>
        <dbReference type="ChEBI" id="CHEBI:144896"/>
    </reaction>
    <physiologicalReaction direction="left-to-right" evidence="1">
        <dbReference type="Rhea" id="RHEA:61625"/>
    </physiologicalReaction>
</comment>
<comment type="cofactor">
    <cofactor evidence="1">
        <name>pyridoxal 5'-phosphate</name>
        <dbReference type="ChEBI" id="CHEBI:597326"/>
    </cofactor>
</comment>
<comment type="pathway">
    <text evidence="1">Amine and polyamine degradation; putrescine degradation; 4-aminobutanal from putrescine (transaminase route): step 1/1.</text>
</comment>
<comment type="similarity">
    <text evidence="1">Belongs to the class-III pyridoxal-phosphate-dependent aminotransferase family. Putrescine aminotransferase subfamily.</text>
</comment>
<comment type="sequence caution" evidence="2">
    <conflict type="erroneous initiation">
        <sequence resource="EMBL-CDS" id="ABR78896"/>
    </conflict>
</comment>
<proteinExistence type="inferred from homology"/>
<dbReference type="EC" id="2.6.1.82" evidence="1"/>
<dbReference type="EC" id="2.6.1.29" evidence="1"/>
<dbReference type="EMBL" id="CP000647">
    <property type="protein sequence ID" value="ABR78896.1"/>
    <property type="status" value="ALT_INIT"/>
    <property type="molecule type" value="Genomic_DNA"/>
</dbReference>
<dbReference type="SMR" id="A6TEB2"/>
<dbReference type="STRING" id="272620.KPN_03501"/>
<dbReference type="PaxDb" id="272620-KPN_03501"/>
<dbReference type="EnsemblBacteria" id="ABR78896">
    <property type="protein sequence ID" value="ABR78896"/>
    <property type="gene ID" value="KPN_03501"/>
</dbReference>
<dbReference type="KEGG" id="kpn:KPN_03501"/>
<dbReference type="HOGENOM" id="CLU_016922_10_0_6"/>
<dbReference type="UniPathway" id="UPA00188">
    <property type="reaction ID" value="UER00290"/>
</dbReference>
<dbReference type="Proteomes" id="UP000000265">
    <property type="component" value="Chromosome"/>
</dbReference>
<dbReference type="GO" id="GO:0019161">
    <property type="term" value="F:diamine transaminase activity"/>
    <property type="evidence" value="ECO:0007669"/>
    <property type="project" value="UniProtKB-EC"/>
</dbReference>
<dbReference type="GO" id="GO:0042802">
    <property type="term" value="F:identical protein binding"/>
    <property type="evidence" value="ECO:0007669"/>
    <property type="project" value="TreeGrafter"/>
</dbReference>
<dbReference type="GO" id="GO:0033094">
    <property type="term" value="F:putrescine--2-oxoglutarate transaminase activity"/>
    <property type="evidence" value="ECO:0007669"/>
    <property type="project" value="UniProtKB-UniRule"/>
</dbReference>
<dbReference type="GO" id="GO:0030170">
    <property type="term" value="F:pyridoxal phosphate binding"/>
    <property type="evidence" value="ECO:0007669"/>
    <property type="project" value="UniProtKB-UniRule"/>
</dbReference>
<dbReference type="GO" id="GO:0019477">
    <property type="term" value="P:L-lysine catabolic process"/>
    <property type="evidence" value="ECO:0007669"/>
    <property type="project" value="UniProtKB-UniRule"/>
</dbReference>
<dbReference type="GO" id="GO:0009447">
    <property type="term" value="P:putrescine catabolic process"/>
    <property type="evidence" value="ECO:0007669"/>
    <property type="project" value="UniProtKB-UniRule"/>
</dbReference>
<dbReference type="CDD" id="cd00610">
    <property type="entry name" value="OAT_like"/>
    <property type="match status" value="1"/>
</dbReference>
<dbReference type="FunFam" id="3.40.640.10:FF:000004">
    <property type="entry name" value="Acetylornithine aminotransferase"/>
    <property type="match status" value="1"/>
</dbReference>
<dbReference type="Gene3D" id="3.90.1150.10">
    <property type="entry name" value="Aspartate Aminotransferase, domain 1"/>
    <property type="match status" value="1"/>
</dbReference>
<dbReference type="Gene3D" id="3.40.640.10">
    <property type="entry name" value="Type I PLP-dependent aspartate aminotransferase-like (Major domain)"/>
    <property type="match status" value="1"/>
</dbReference>
<dbReference type="HAMAP" id="MF_01276">
    <property type="entry name" value="Putres_aminotrans_3"/>
    <property type="match status" value="1"/>
</dbReference>
<dbReference type="InterPro" id="IPR005814">
    <property type="entry name" value="Aminotrans_3"/>
</dbReference>
<dbReference type="InterPro" id="IPR049704">
    <property type="entry name" value="Aminotrans_3_PPA_site"/>
</dbReference>
<dbReference type="InterPro" id="IPR050103">
    <property type="entry name" value="Class-III_PLP-dep_AT"/>
</dbReference>
<dbReference type="InterPro" id="IPR017747">
    <property type="entry name" value="Putrescine_aminotransferase"/>
</dbReference>
<dbReference type="InterPro" id="IPR015424">
    <property type="entry name" value="PyrdxlP-dep_Trfase"/>
</dbReference>
<dbReference type="InterPro" id="IPR015421">
    <property type="entry name" value="PyrdxlP-dep_Trfase_major"/>
</dbReference>
<dbReference type="InterPro" id="IPR015422">
    <property type="entry name" value="PyrdxlP-dep_Trfase_small"/>
</dbReference>
<dbReference type="NCBIfam" id="NF008570">
    <property type="entry name" value="PRK11522.1"/>
    <property type="match status" value="1"/>
</dbReference>
<dbReference type="NCBIfam" id="TIGR03372">
    <property type="entry name" value="putres_am_tran"/>
    <property type="match status" value="1"/>
</dbReference>
<dbReference type="PANTHER" id="PTHR11986">
    <property type="entry name" value="AMINOTRANSFERASE CLASS III"/>
    <property type="match status" value="1"/>
</dbReference>
<dbReference type="PANTHER" id="PTHR11986:SF112">
    <property type="entry name" value="PUTRESCINE AMINOTRANSFERASE"/>
    <property type="match status" value="1"/>
</dbReference>
<dbReference type="Pfam" id="PF00202">
    <property type="entry name" value="Aminotran_3"/>
    <property type="match status" value="1"/>
</dbReference>
<dbReference type="PIRSF" id="PIRSF000521">
    <property type="entry name" value="Transaminase_4ab_Lys_Orn"/>
    <property type="match status" value="1"/>
</dbReference>
<dbReference type="SUPFAM" id="SSF53383">
    <property type="entry name" value="PLP-dependent transferases"/>
    <property type="match status" value="1"/>
</dbReference>
<dbReference type="PROSITE" id="PS00600">
    <property type="entry name" value="AA_TRANSFER_CLASS_3"/>
    <property type="match status" value="1"/>
</dbReference>
<organism>
    <name type="scientific">Klebsiella pneumoniae subsp. pneumoniae (strain ATCC 700721 / MGH 78578)</name>
    <dbReference type="NCBI Taxonomy" id="272620"/>
    <lineage>
        <taxon>Bacteria</taxon>
        <taxon>Pseudomonadati</taxon>
        <taxon>Pseudomonadota</taxon>
        <taxon>Gammaproteobacteria</taxon>
        <taxon>Enterobacterales</taxon>
        <taxon>Enterobacteriaceae</taxon>
        <taxon>Klebsiella/Raoultella group</taxon>
        <taxon>Klebsiella</taxon>
        <taxon>Klebsiella pneumoniae complex</taxon>
    </lineage>
</organism>
<accession>A6TEB2</accession>
<protein>
    <recommendedName>
        <fullName evidence="1">Putrescine aminotransferase</fullName>
        <shortName evidence="1">PAT</shortName>
        <shortName evidence="1">PATase</shortName>
        <ecNumber evidence="1">2.6.1.82</ecNumber>
    </recommendedName>
    <alternativeName>
        <fullName evidence="1">Cadaverine transaminase</fullName>
    </alternativeName>
    <alternativeName>
        <fullName evidence="1">Diamine transaminase</fullName>
        <ecNumber evidence="1">2.6.1.29</ecNumber>
    </alternativeName>
    <alternativeName>
        <fullName evidence="1">Putrescine transaminase</fullName>
    </alternativeName>
    <alternativeName>
        <fullName evidence="1">Putrescine--2-oxoglutaric acid transaminase</fullName>
    </alternativeName>
</protein>
<reference key="1">
    <citation type="submission" date="2006-09" db="EMBL/GenBank/DDBJ databases">
        <authorList>
            <consortium name="The Klebsiella pneumonia Genome Sequencing Project"/>
            <person name="McClelland M."/>
            <person name="Sanderson E.K."/>
            <person name="Spieth J."/>
            <person name="Clifton W.S."/>
            <person name="Latreille P."/>
            <person name="Sabo A."/>
            <person name="Pepin K."/>
            <person name="Bhonagiri V."/>
            <person name="Porwollik S."/>
            <person name="Ali J."/>
            <person name="Wilson R.K."/>
        </authorList>
    </citation>
    <scope>NUCLEOTIDE SEQUENCE [LARGE SCALE GENOMIC DNA]</scope>
    <source>
        <strain>ATCC 700721 / MGH 78578</strain>
    </source>
</reference>
<name>PAT_KLEP7</name>
<evidence type="ECO:0000255" key="1">
    <source>
        <dbReference type="HAMAP-Rule" id="MF_01276"/>
    </source>
</evidence>
<evidence type="ECO:0000305" key="2"/>
<feature type="chain" id="PRO_0000379560" description="Putrescine aminotransferase">
    <location>
        <begin position="1"/>
        <end position="459"/>
    </location>
</feature>
<feature type="binding site" description="in other chain" evidence="1">
    <location>
        <begin position="150"/>
        <end position="151"/>
    </location>
    <ligand>
        <name>pyridoxal 5'-phosphate</name>
        <dbReference type="ChEBI" id="CHEBI:597326"/>
        <note>ligand shared between dimeric partners</note>
    </ligand>
</feature>
<feature type="binding site" description="in other chain" evidence="1">
    <location>
        <position position="274"/>
    </location>
    <ligand>
        <name>pyridoxal 5'-phosphate</name>
        <dbReference type="ChEBI" id="CHEBI:597326"/>
        <note>ligand shared between dimeric partners</note>
    </ligand>
</feature>
<feature type="binding site" evidence="1">
    <location>
        <position position="332"/>
    </location>
    <ligand>
        <name>pyridoxal 5'-phosphate</name>
        <dbReference type="ChEBI" id="CHEBI:597326"/>
        <note>ligand shared between dimeric partners</note>
    </ligand>
</feature>
<feature type="modified residue" description="N6-(pyridoxal phosphate)lysine" evidence="1">
    <location>
        <position position="300"/>
    </location>
</feature>
<sequence>MNRLPSSASALACSAHALNLIEKRTLDHEEMKALNQEVREYFKEHVNPGFLEYRKSVTAGGDYGAVEWQAGGLNTLVDTQGQEFIDCLGGFGIFNVGHRNPVVVSAVENQLAKQPLHSQELLDPLRAMLAKTLAALTPGKLKYSFFCNSGTESVEAAIKLAKAYQSPRGKFTFIATSGAFHGKSLGALSATAKSTFRKPFMPLLPGFRHVPFGDINAMRTMLSECKKTGDDVAAVILEPIQGEGGVILPPTGYLPAVRKLCDEFGALLILDEVQTGMGRTGKMFACEHENVQPDILCLAKALGGGVMPIGATVATEEVFSVLFDNPFLHTTTFGGNPLACAAALATINVLLTQNLPAQAAQKGDMLLDGFRLLAQEYPDLVNEVRGKGMLMAIEFVDNEIGYDFASEMFRQRVLVAGTLNNAKTIRIEPPLTLTLEQCEQVLKAARKALAALRVSVEEA</sequence>